<organism>
    <name type="scientific">Phocaeicola plebeius (strain DSM 17135 / JCM 12973 / CCUG 54634 / M2)</name>
    <name type="common">Bacteroides plebeius</name>
    <dbReference type="NCBI Taxonomy" id="484018"/>
    <lineage>
        <taxon>Bacteria</taxon>
        <taxon>Pseudomonadati</taxon>
        <taxon>Bacteroidota</taxon>
        <taxon>Bacteroidia</taxon>
        <taxon>Bacteroidales</taxon>
        <taxon>Bacteroidaceae</taxon>
        <taxon>Phocaeicola</taxon>
    </lineage>
</organism>
<keyword id="KW-0326">Glycosidase</keyword>
<keyword id="KW-0378">Hydrolase</keyword>
<keyword id="KW-0732">Signal</keyword>
<comment type="function">
    <text evidence="4">Cleaves the beta-1,4-linkages between beta-D-galactose and alpha-L-3,6-anhydro-galactose residues in agarose. Cleaves agarose in a random manner with retention of the anomeric-bond configuration, producing beta-anomers that give rise progressively to alpha-anomers when mutarotation takes place.</text>
</comment>
<comment type="catalytic activity">
    <reaction evidence="4">
        <text>Hydrolysis of (1-&gt;4)-beta-D-galactosidic linkages in agarose, giving the tetramer as the predominant product.</text>
        <dbReference type="EC" id="3.2.1.81"/>
    </reaction>
</comment>
<comment type="miscellaneous">
    <text>Gut bacteria supply the human body with energy from dietary polysaccharides through glycosidases that are absent in the human genome. Beta-agarases, which are active on agarose from marine red algae of the genus Porphyra, are present in marine bacteria. They are absent from metagenome data of gut bacteria, except from the genome of the gut bacterium B.plebeius isolated from Japanese individuals. Seaweeds make an important contribution to the diet in Japan and Porphyra (nori) is the most important nutritional seaweed used to prepare sushi, suggesting that seaweeds with associated marine bacteria have been the route by which genes coding for beta-agarases have been transferred in human gut B.plebeius genome (PubMed:20376150, PubMed:23150581).</text>
</comment>
<comment type="similarity">
    <text evidence="5">Belongs to the glycosyl hydrolase 16 family.</text>
</comment>
<comment type="online information" name="Protein Spotlight">
    <link uri="https://www.proteinspotlight.org/back_issues/158/"/>
    <text>A gut's tale - Issue 158 of March 2014</text>
</comment>
<reference key="1">
    <citation type="submission" date="2008-08" db="EMBL/GenBank/DDBJ databases">
        <title>Draft genome sequence of Bacteroides plebeius (DSM 17135).</title>
        <authorList>
            <person name="Sudarsanam P."/>
            <person name="Ley R."/>
            <person name="Guruge J."/>
            <person name="Turnbaugh P.J."/>
            <person name="Mahowald M."/>
            <person name="Liep D."/>
            <person name="Gordon J."/>
        </authorList>
    </citation>
    <scope>NUCLEOTIDE SEQUENCE [LARGE SCALE GENOMIC DNA]</scope>
    <source>
        <strain>DSM 17135 / JCM 12973 / CCUG 54634 / M2</strain>
    </source>
</reference>
<reference key="2">
    <citation type="journal article" date="2010" name="Nature">
        <title>Transfer of carbohydrate-active enzymes from marine bacteria to Japanese gut microbiota.</title>
        <authorList>
            <person name="Hehemann J.H."/>
            <person name="Correc G."/>
            <person name="Barbeyron T."/>
            <person name="Helbert W."/>
            <person name="Czjzek M."/>
            <person name="Michel G."/>
        </authorList>
    </citation>
    <scope>IDENTIFICATION</scope>
    <source>
        <strain>DSM 17135 / JCM 12973 / CCUG 54634 / M2</strain>
    </source>
</reference>
<reference key="3">
    <citation type="journal article" date="2012" name="Proc. Natl. Acad. Sci. U.S.A.">
        <title>Bacteria of the human gut microbiome catabolize red seaweed glycans with carbohydrate-active enzyme updates from extrinsic microbes.</title>
        <authorList>
            <person name="Hehemann J.H."/>
            <person name="Kelly A.G."/>
            <person name="Pudlo N.A."/>
            <person name="Martens E.C."/>
            <person name="Boraston A.B."/>
        </authorList>
    </citation>
    <scope>FUNCTION</scope>
    <scope>CATALYTIC ACTIVITY</scope>
    <source>
        <strain>DSM 17135 / JCM 12973 / CCUG 54634 / M2</strain>
    </source>
</reference>
<gene>
    <name type="ORF">BACPLE_01670</name>
</gene>
<protein>
    <recommendedName>
        <fullName>Beta-agarase</fullName>
        <ecNumber>3.2.1.81</ecNumber>
    </recommendedName>
    <alternativeName>
        <fullName>Glycosyl hydrolase 16 family protein A</fullName>
        <shortName>GH16A</shortName>
    </alternativeName>
</protein>
<accession>B5CY73</accession>
<evidence type="ECO:0000250" key="1">
    <source>
        <dbReference type="UniProtKB" id="G0L322"/>
    </source>
</evidence>
<evidence type="ECO:0000255" key="2"/>
<evidence type="ECO:0000255" key="3">
    <source>
        <dbReference type="PROSITE-ProRule" id="PRU01098"/>
    </source>
</evidence>
<evidence type="ECO:0000269" key="4">
    <source>
    </source>
</evidence>
<evidence type="ECO:0000305" key="5"/>
<proteinExistence type="evidence at protein level"/>
<feature type="signal peptide" evidence="2">
    <location>
        <begin position="1"/>
        <end position="18"/>
    </location>
</feature>
<feature type="chain" id="PRO_0000422029" description="Beta-agarase">
    <location>
        <begin position="19"/>
        <end position="316"/>
    </location>
</feature>
<feature type="domain" description="GH16" evidence="3">
    <location>
        <begin position="27"/>
        <end position="315"/>
    </location>
</feature>
<feature type="active site" description="Nucleophile" evidence="1">
    <location>
        <position position="167"/>
    </location>
</feature>
<feature type="active site" description="Proton donor" evidence="1">
    <location>
        <position position="172"/>
    </location>
</feature>
<feature type="binding site" evidence="1">
    <location>
        <position position="78"/>
    </location>
    <ligand>
        <name>substrate</name>
    </ligand>
</feature>
<feature type="binding site" evidence="1">
    <location>
        <begin position="87"/>
        <end position="97"/>
    </location>
    <ligand>
        <name>substrate</name>
    </ligand>
</feature>
<feature type="binding site" evidence="1">
    <location>
        <begin position="101"/>
        <end position="103"/>
    </location>
    <ligand>
        <name>substrate</name>
    </ligand>
</feature>
<feature type="binding site" evidence="1">
    <location>
        <position position="197"/>
    </location>
    <ligand>
        <name>substrate</name>
    </ligand>
</feature>
<sequence>MKRKLFTICLASLQFACAAENLNNKSYEWDIYPVPANAGDGMVWKLHPQSDDFNYIADEKDKGKEFYAKWTDFYHNHWTGPAPTIWQRDHVSVSDGFLKIRASRPEDVPLKKVVSGPNTKELPGTYTGCITSKTRVKYPVYVEAYAKLSNSTMASDVWMLSPDDTQEIDIIEAYGGDRDGGGYGADRLHLSHHIFIRQPFKDYQPKDSGSWYKDDKGTLWRDDFHRVGVFWKDPFTLEYYVDGELVRTISGKDIIDPNNYTGGTGLVKDMDIIINMEDQSWRAVKGLSPTDEELKNVEDHTFLVDWIRVYTLVPEE</sequence>
<name>BAGA_PHOPM</name>
<dbReference type="EC" id="3.2.1.81"/>
<dbReference type="EMBL" id="ABQC02000019">
    <property type="protein sequence ID" value="EDY95404.1"/>
    <property type="molecule type" value="Genomic_DNA"/>
</dbReference>
<dbReference type="RefSeq" id="WP_007560915.1">
    <property type="nucleotide sequence ID" value="NZ_DS990130.1"/>
</dbReference>
<dbReference type="SMR" id="B5CY73"/>
<dbReference type="CAZy" id="GH16">
    <property type="family name" value="Glycoside Hydrolase Family 16"/>
</dbReference>
<dbReference type="GeneID" id="43184702"/>
<dbReference type="eggNOG" id="COG2273">
    <property type="taxonomic scope" value="Bacteria"/>
</dbReference>
<dbReference type="HOGENOM" id="CLU_037753_0_0_10"/>
<dbReference type="OrthoDB" id="9809583at2"/>
<dbReference type="Proteomes" id="UP000003452">
    <property type="component" value="Unassembled WGS sequence"/>
</dbReference>
<dbReference type="GO" id="GO:0033916">
    <property type="term" value="F:beta-agarase activity"/>
    <property type="evidence" value="ECO:0007669"/>
    <property type="project" value="UniProtKB-EC"/>
</dbReference>
<dbReference type="GO" id="GO:0005975">
    <property type="term" value="P:carbohydrate metabolic process"/>
    <property type="evidence" value="ECO:0007669"/>
    <property type="project" value="InterPro"/>
</dbReference>
<dbReference type="CDD" id="cd02178">
    <property type="entry name" value="GH16_beta_agarase"/>
    <property type="match status" value="1"/>
</dbReference>
<dbReference type="Gene3D" id="2.60.120.200">
    <property type="match status" value="1"/>
</dbReference>
<dbReference type="InterPro" id="IPR016287">
    <property type="entry name" value="Beta_agarase"/>
</dbReference>
<dbReference type="InterPro" id="IPR013320">
    <property type="entry name" value="ConA-like_dom_sf"/>
</dbReference>
<dbReference type="InterPro" id="IPR000757">
    <property type="entry name" value="GH16"/>
</dbReference>
<dbReference type="InterPro" id="IPR050546">
    <property type="entry name" value="Glycosyl_Hydrlase_16"/>
</dbReference>
<dbReference type="PANTHER" id="PTHR10963:SF55">
    <property type="entry name" value="GLYCOSIDE HYDROLASE FAMILY 16 PROTEIN"/>
    <property type="match status" value="1"/>
</dbReference>
<dbReference type="PANTHER" id="PTHR10963">
    <property type="entry name" value="GLYCOSYL HYDROLASE-RELATED"/>
    <property type="match status" value="1"/>
</dbReference>
<dbReference type="Pfam" id="PF00722">
    <property type="entry name" value="Glyco_hydro_16"/>
    <property type="match status" value="1"/>
</dbReference>
<dbReference type="PIRSF" id="PIRSF001097">
    <property type="entry name" value="Agarase"/>
    <property type="match status" value="1"/>
</dbReference>
<dbReference type="SUPFAM" id="SSF49899">
    <property type="entry name" value="Concanavalin A-like lectins/glucanases"/>
    <property type="match status" value="1"/>
</dbReference>
<dbReference type="PROSITE" id="PS51762">
    <property type="entry name" value="GH16_2"/>
    <property type="match status" value="1"/>
</dbReference>